<protein>
    <recommendedName>
        <fullName evidence="1">Chorismate synthase</fullName>
        <shortName evidence="1">CS</shortName>
        <ecNumber evidence="1">4.2.3.5</ecNumber>
    </recommendedName>
    <alternativeName>
        <fullName evidence="1">5-enolpyruvylshikimate-3-phosphate phospholyase</fullName>
    </alternativeName>
</protein>
<dbReference type="EC" id="4.2.3.5" evidence="1"/>
<dbReference type="EMBL" id="CP000285">
    <property type="protein sequence ID" value="ABE59813.1"/>
    <property type="molecule type" value="Genomic_DNA"/>
</dbReference>
<dbReference type="RefSeq" id="WP_011507759.1">
    <property type="nucleotide sequence ID" value="NC_007963.1"/>
</dbReference>
<dbReference type="SMR" id="Q1QUP5"/>
<dbReference type="STRING" id="290398.Csal_2466"/>
<dbReference type="GeneID" id="95335172"/>
<dbReference type="KEGG" id="csa:Csal_2466"/>
<dbReference type="eggNOG" id="COG0082">
    <property type="taxonomic scope" value="Bacteria"/>
</dbReference>
<dbReference type="HOGENOM" id="CLU_034547_0_2_6"/>
<dbReference type="OrthoDB" id="9771806at2"/>
<dbReference type="UniPathway" id="UPA00053">
    <property type="reaction ID" value="UER00090"/>
</dbReference>
<dbReference type="Proteomes" id="UP000000239">
    <property type="component" value="Chromosome"/>
</dbReference>
<dbReference type="GO" id="GO:0005829">
    <property type="term" value="C:cytosol"/>
    <property type="evidence" value="ECO:0007669"/>
    <property type="project" value="TreeGrafter"/>
</dbReference>
<dbReference type="GO" id="GO:0004107">
    <property type="term" value="F:chorismate synthase activity"/>
    <property type="evidence" value="ECO:0007669"/>
    <property type="project" value="UniProtKB-UniRule"/>
</dbReference>
<dbReference type="GO" id="GO:0010181">
    <property type="term" value="F:FMN binding"/>
    <property type="evidence" value="ECO:0007669"/>
    <property type="project" value="TreeGrafter"/>
</dbReference>
<dbReference type="GO" id="GO:0008652">
    <property type="term" value="P:amino acid biosynthetic process"/>
    <property type="evidence" value="ECO:0007669"/>
    <property type="project" value="UniProtKB-KW"/>
</dbReference>
<dbReference type="GO" id="GO:0009073">
    <property type="term" value="P:aromatic amino acid family biosynthetic process"/>
    <property type="evidence" value="ECO:0007669"/>
    <property type="project" value="UniProtKB-KW"/>
</dbReference>
<dbReference type="GO" id="GO:0009423">
    <property type="term" value="P:chorismate biosynthetic process"/>
    <property type="evidence" value="ECO:0007669"/>
    <property type="project" value="UniProtKB-UniRule"/>
</dbReference>
<dbReference type="CDD" id="cd07304">
    <property type="entry name" value="Chorismate_synthase"/>
    <property type="match status" value="1"/>
</dbReference>
<dbReference type="FunFam" id="3.60.150.10:FF:000001">
    <property type="entry name" value="Chorismate synthase"/>
    <property type="match status" value="1"/>
</dbReference>
<dbReference type="Gene3D" id="3.60.150.10">
    <property type="entry name" value="Chorismate synthase AroC"/>
    <property type="match status" value="1"/>
</dbReference>
<dbReference type="HAMAP" id="MF_00300">
    <property type="entry name" value="Chorismate_synth"/>
    <property type="match status" value="1"/>
</dbReference>
<dbReference type="InterPro" id="IPR000453">
    <property type="entry name" value="Chorismate_synth"/>
</dbReference>
<dbReference type="InterPro" id="IPR035904">
    <property type="entry name" value="Chorismate_synth_AroC_sf"/>
</dbReference>
<dbReference type="InterPro" id="IPR020541">
    <property type="entry name" value="Chorismate_synthase_CS"/>
</dbReference>
<dbReference type="NCBIfam" id="TIGR00033">
    <property type="entry name" value="aroC"/>
    <property type="match status" value="1"/>
</dbReference>
<dbReference type="NCBIfam" id="NF003793">
    <property type="entry name" value="PRK05382.1"/>
    <property type="match status" value="1"/>
</dbReference>
<dbReference type="PANTHER" id="PTHR21085">
    <property type="entry name" value="CHORISMATE SYNTHASE"/>
    <property type="match status" value="1"/>
</dbReference>
<dbReference type="PANTHER" id="PTHR21085:SF0">
    <property type="entry name" value="CHORISMATE SYNTHASE"/>
    <property type="match status" value="1"/>
</dbReference>
<dbReference type="Pfam" id="PF01264">
    <property type="entry name" value="Chorismate_synt"/>
    <property type="match status" value="1"/>
</dbReference>
<dbReference type="PIRSF" id="PIRSF001456">
    <property type="entry name" value="Chorismate_synth"/>
    <property type="match status" value="1"/>
</dbReference>
<dbReference type="SUPFAM" id="SSF103263">
    <property type="entry name" value="Chorismate synthase, AroC"/>
    <property type="match status" value="1"/>
</dbReference>
<dbReference type="PROSITE" id="PS00787">
    <property type="entry name" value="CHORISMATE_SYNTHASE_1"/>
    <property type="match status" value="1"/>
</dbReference>
<dbReference type="PROSITE" id="PS00788">
    <property type="entry name" value="CHORISMATE_SYNTHASE_2"/>
    <property type="match status" value="1"/>
</dbReference>
<dbReference type="PROSITE" id="PS00789">
    <property type="entry name" value="CHORISMATE_SYNTHASE_3"/>
    <property type="match status" value="1"/>
</dbReference>
<sequence>MSGNTFGKLFTVTTFGESHGEALGAIVDGCPPGVALEASDLQHDLDRRRPGTSRHTTQRREPDQVRILSGVFEGVTTGTPIGLLIENTDQRSKDYSKIKDQFRPAHADYTYHHKYGIRDYRGGGRSSARETAMRVAAGAIARKFLASQGIRVRGYMSQLGPIDIAFKQWEAVDTNPFFCPDPDKLPELEAFMDQLRRDQDSVGARITVVADGVPVGLGEPVFDRLDADLAHALMSINAVKGVEIGDGFASVAQRGSEHRDEMTPQGFLSNHAGGVLGGISSGQPLIAHLALKPTSSITQPGRSIDVHGEAVEVVTKGRHDPCVGIRATPIAEAMMALTLMDHYLRHRAQNADVEVSTPRLG</sequence>
<comment type="function">
    <text evidence="1">Catalyzes the anti-1,4-elimination of the C-3 phosphate and the C-6 proR hydrogen from 5-enolpyruvylshikimate-3-phosphate (EPSP) to yield chorismate, which is the branch point compound that serves as the starting substrate for the three terminal pathways of aromatic amino acid biosynthesis. This reaction introduces a second double bond into the aromatic ring system.</text>
</comment>
<comment type="catalytic activity">
    <reaction evidence="1">
        <text>5-O-(1-carboxyvinyl)-3-phosphoshikimate = chorismate + phosphate</text>
        <dbReference type="Rhea" id="RHEA:21020"/>
        <dbReference type="ChEBI" id="CHEBI:29748"/>
        <dbReference type="ChEBI" id="CHEBI:43474"/>
        <dbReference type="ChEBI" id="CHEBI:57701"/>
        <dbReference type="EC" id="4.2.3.5"/>
    </reaction>
</comment>
<comment type="cofactor">
    <cofactor evidence="1">
        <name>FMNH2</name>
        <dbReference type="ChEBI" id="CHEBI:57618"/>
    </cofactor>
    <text evidence="1">Reduced FMN (FMNH(2)).</text>
</comment>
<comment type="pathway">
    <text evidence="1">Metabolic intermediate biosynthesis; chorismate biosynthesis; chorismate from D-erythrose 4-phosphate and phosphoenolpyruvate: step 7/7.</text>
</comment>
<comment type="subunit">
    <text evidence="1">Homotetramer.</text>
</comment>
<comment type="similarity">
    <text evidence="1">Belongs to the chorismate synthase family.</text>
</comment>
<gene>
    <name evidence="1" type="primary">aroC</name>
    <name type="ordered locus">Csal_2466</name>
</gene>
<feature type="chain" id="PRO_0000256285" description="Chorismate synthase">
    <location>
        <begin position="1"/>
        <end position="361"/>
    </location>
</feature>
<feature type="region of interest" description="Disordered" evidence="2">
    <location>
        <begin position="40"/>
        <end position="60"/>
    </location>
</feature>
<feature type="compositionally biased region" description="Basic and acidic residues" evidence="2">
    <location>
        <begin position="40"/>
        <end position="49"/>
    </location>
</feature>
<feature type="binding site" evidence="1">
    <location>
        <position position="48"/>
    </location>
    <ligand>
        <name>NADP(+)</name>
        <dbReference type="ChEBI" id="CHEBI:58349"/>
    </ligand>
</feature>
<feature type="binding site" evidence="1">
    <location>
        <position position="54"/>
    </location>
    <ligand>
        <name>NADP(+)</name>
        <dbReference type="ChEBI" id="CHEBI:58349"/>
    </ligand>
</feature>
<feature type="binding site" evidence="1">
    <location>
        <begin position="125"/>
        <end position="127"/>
    </location>
    <ligand>
        <name>FMN</name>
        <dbReference type="ChEBI" id="CHEBI:58210"/>
    </ligand>
</feature>
<feature type="binding site" evidence="1">
    <location>
        <begin position="237"/>
        <end position="238"/>
    </location>
    <ligand>
        <name>FMN</name>
        <dbReference type="ChEBI" id="CHEBI:58210"/>
    </ligand>
</feature>
<feature type="binding site" evidence="1">
    <location>
        <position position="277"/>
    </location>
    <ligand>
        <name>FMN</name>
        <dbReference type="ChEBI" id="CHEBI:58210"/>
    </ligand>
</feature>
<feature type="binding site" evidence="1">
    <location>
        <begin position="292"/>
        <end position="296"/>
    </location>
    <ligand>
        <name>FMN</name>
        <dbReference type="ChEBI" id="CHEBI:58210"/>
    </ligand>
</feature>
<feature type="binding site" evidence="1">
    <location>
        <position position="318"/>
    </location>
    <ligand>
        <name>FMN</name>
        <dbReference type="ChEBI" id="CHEBI:58210"/>
    </ligand>
</feature>
<proteinExistence type="inferred from homology"/>
<evidence type="ECO:0000255" key="1">
    <source>
        <dbReference type="HAMAP-Rule" id="MF_00300"/>
    </source>
</evidence>
<evidence type="ECO:0000256" key="2">
    <source>
        <dbReference type="SAM" id="MobiDB-lite"/>
    </source>
</evidence>
<keyword id="KW-0028">Amino-acid biosynthesis</keyword>
<keyword id="KW-0057">Aromatic amino acid biosynthesis</keyword>
<keyword id="KW-0274">FAD</keyword>
<keyword id="KW-0285">Flavoprotein</keyword>
<keyword id="KW-0288">FMN</keyword>
<keyword id="KW-0456">Lyase</keyword>
<keyword id="KW-0521">NADP</keyword>
<keyword id="KW-1185">Reference proteome</keyword>
<reference key="1">
    <citation type="journal article" date="2011" name="Stand. Genomic Sci.">
        <title>Complete genome sequence of the halophilic and highly halotolerant Chromohalobacter salexigens type strain (1H11(T)).</title>
        <authorList>
            <person name="Copeland A."/>
            <person name="O'Connor K."/>
            <person name="Lucas S."/>
            <person name="Lapidus A."/>
            <person name="Berry K.W."/>
            <person name="Detter J.C."/>
            <person name="Del Rio T.G."/>
            <person name="Hammon N."/>
            <person name="Dalin E."/>
            <person name="Tice H."/>
            <person name="Pitluck S."/>
            <person name="Bruce D."/>
            <person name="Goodwin L."/>
            <person name="Han C."/>
            <person name="Tapia R."/>
            <person name="Saunders E."/>
            <person name="Schmutz J."/>
            <person name="Brettin T."/>
            <person name="Larimer F."/>
            <person name="Land M."/>
            <person name="Hauser L."/>
            <person name="Vargas C."/>
            <person name="Nieto J.J."/>
            <person name="Kyrpides N.C."/>
            <person name="Ivanova N."/>
            <person name="Goker M."/>
            <person name="Klenk H.P."/>
            <person name="Csonka L.N."/>
            <person name="Woyke T."/>
        </authorList>
    </citation>
    <scope>NUCLEOTIDE SEQUENCE [LARGE SCALE GENOMIC DNA]</scope>
    <source>
        <strain>ATCC BAA-138 / DSM 3043 / CIP 106854 / NCIMB 13768 / 1H11</strain>
    </source>
</reference>
<name>AROC_CHRSD</name>
<organism>
    <name type="scientific">Chromohalobacter salexigens (strain ATCC BAA-138 / DSM 3043 / CIP 106854 / NCIMB 13768 / 1H11)</name>
    <dbReference type="NCBI Taxonomy" id="290398"/>
    <lineage>
        <taxon>Bacteria</taxon>
        <taxon>Pseudomonadati</taxon>
        <taxon>Pseudomonadota</taxon>
        <taxon>Gammaproteobacteria</taxon>
        <taxon>Oceanospirillales</taxon>
        <taxon>Halomonadaceae</taxon>
        <taxon>Chromohalobacter</taxon>
    </lineage>
</organism>
<accession>Q1QUP5</accession>